<gene>
    <name type="ordered locus">Bind_2345</name>
</gene>
<proteinExistence type="inferred from homology"/>
<name>FENR_BEII9</name>
<keyword id="KW-0274">FAD</keyword>
<keyword id="KW-0285">Flavoprotein</keyword>
<keyword id="KW-0521">NADP</keyword>
<keyword id="KW-0560">Oxidoreductase</keyword>
<keyword id="KW-1185">Reference proteome</keyword>
<accession>B2IHR5</accession>
<sequence length="344" mass="37547">MGEAIVTDVVIVGAGPAGLFAVFELGLLDIKSHLIDILAKPGGQCAELYPEKPIYDIPGYPRVNGQELVDNLLAQIEPFHPTFHFGEMVERLEVLGTPEAPSFRVHTSGGEIFESKVVIVAAGGGSFQPKKPPIEGIEAFERKSVFYAVRKMEDFRDKHVVIVGGGDSALDWTLNLHPIAKRITLVHRRDDFRAAPHSVNSMRELVAAGHMDLRLGQIVSLRGEAGELSAVVLKGSDGEAEIACERLVPFFGLTMKLGPIADWGLNLHENLIPVDTEKFETNVSGIFAIGDINTYPGKLKLILSGFHEGALAAQKVHRYVYPDKRLSFQYTTSSSSLQKKLGVN</sequence>
<protein>
    <recommendedName>
        <fullName evidence="1">Ferredoxin--NADP reductase</fullName>
        <shortName evidence="1">FNR</shortName>
        <shortName evidence="1">Fd-NADP(+) reductase</shortName>
        <ecNumber evidence="1">1.18.1.2</ecNumber>
    </recommendedName>
</protein>
<comment type="catalytic activity">
    <reaction evidence="1">
        <text>2 reduced [2Fe-2S]-[ferredoxin] + NADP(+) + H(+) = 2 oxidized [2Fe-2S]-[ferredoxin] + NADPH</text>
        <dbReference type="Rhea" id="RHEA:20125"/>
        <dbReference type="Rhea" id="RHEA-COMP:10000"/>
        <dbReference type="Rhea" id="RHEA-COMP:10001"/>
        <dbReference type="ChEBI" id="CHEBI:15378"/>
        <dbReference type="ChEBI" id="CHEBI:33737"/>
        <dbReference type="ChEBI" id="CHEBI:33738"/>
        <dbReference type="ChEBI" id="CHEBI:57783"/>
        <dbReference type="ChEBI" id="CHEBI:58349"/>
        <dbReference type="EC" id="1.18.1.2"/>
    </reaction>
</comment>
<comment type="cofactor">
    <cofactor evidence="1">
        <name>FAD</name>
        <dbReference type="ChEBI" id="CHEBI:57692"/>
    </cofactor>
    <text evidence="1">Binds 1 FAD per subunit.</text>
</comment>
<comment type="subunit">
    <text evidence="1">Homodimer.</text>
</comment>
<comment type="similarity">
    <text evidence="1">Belongs to the ferredoxin--NADP reductase type 2 family.</text>
</comment>
<reference key="1">
    <citation type="journal article" date="2010" name="J. Bacteriol.">
        <title>Complete genome sequence of Beijerinckia indica subsp. indica.</title>
        <authorList>
            <person name="Tamas I."/>
            <person name="Dedysh S.N."/>
            <person name="Liesack W."/>
            <person name="Stott M.B."/>
            <person name="Alam M."/>
            <person name="Murrell J.C."/>
            <person name="Dunfield P.F."/>
        </authorList>
    </citation>
    <scope>NUCLEOTIDE SEQUENCE [LARGE SCALE GENOMIC DNA]</scope>
    <source>
        <strain>ATCC 9039 / DSM 1715 / NCIMB 8712</strain>
    </source>
</reference>
<dbReference type="EC" id="1.18.1.2" evidence="1"/>
<dbReference type="EMBL" id="CP001016">
    <property type="protein sequence ID" value="ACB95958.1"/>
    <property type="molecule type" value="Genomic_DNA"/>
</dbReference>
<dbReference type="RefSeq" id="WP_012385311.1">
    <property type="nucleotide sequence ID" value="NC_010581.1"/>
</dbReference>
<dbReference type="SMR" id="B2IHR5"/>
<dbReference type="STRING" id="395963.Bind_2345"/>
<dbReference type="KEGG" id="bid:Bind_2345"/>
<dbReference type="eggNOG" id="COG0492">
    <property type="taxonomic scope" value="Bacteria"/>
</dbReference>
<dbReference type="HOGENOM" id="CLU_031864_5_5_5"/>
<dbReference type="OrthoDB" id="9806179at2"/>
<dbReference type="Proteomes" id="UP000001695">
    <property type="component" value="Chromosome"/>
</dbReference>
<dbReference type="GO" id="GO:0004324">
    <property type="term" value="F:ferredoxin-NADP+ reductase activity"/>
    <property type="evidence" value="ECO:0007669"/>
    <property type="project" value="UniProtKB-UniRule"/>
</dbReference>
<dbReference type="GO" id="GO:0050660">
    <property type="term" value="F:flavin adenine dinucleotide binding"/>
    <property type="evidence" value="ECO:0007669"/>
    <property type="project" value="UniProtKB-UniRule"/>
</dbReference>
<dbReference type="GO" id="GO:0050661">
    <property type="term" value="F:NADP binding"/>
    <property type="evidence" value="ECO:0007669"/>
    <property type="project" value="UniProtKB-UniRule"/>
</dbReference>
<dbReference type="Gene3D" id="3.50.50.60">
    <property type="entry name" value="FAD/NAD(P)-binding domain"/>
    <property type="match status" value="2"/>
</dbReference>
<dbReference type="HAMAP" id="MF_01685">
    <property type="entry name" value="FENR2"/>
    <property type="match status" value="1"/>
</dbReference>
<dbReference type="InterPro" id="IPR036188">
    <property type="entry name" value="FAD/NAD-bd_sf"/>
</dbReference>
<dbReference type="InterPro" id="IPR023753">
    <property type="entry name" value="FAD/NAD-binding_dom"/>
</dbReference>
<dbReference type="InterPro" id="IPR022890">
    <property type="entry name" value="Fd--NADP_Rdtase_type_2"/>
</dbReference>
<dbReference type="InterPro" id="IPR050097">
    <property type="entry name" value="Ferredoxin-NADP_redctase_2"/>
</dbReference>
<dbReference type="PANTHER" id="PTHR48105">
    <property type="entry name" value="THIOREDOXIN REDUCTASE 1-RELATED-RELATED"/>
    <property type="match status" value="1"/>
</dbReference>
<dbReference type="Pfam" id="PF07992">
    <property type="entry name" value="Pyr_redox_2"/>
    <property type="match status" value="1"/>
</dbReference>
<dbReference type="PRINTS" id="PR00368">
    <property type="entry name" value="FADPNR"/>
</dbReference>
<dbReference type="PRINTS" id="PR00469">
    <property type="entry name" value="PNDRDTASEII"/>
</dbReference>
<dbReference type="SUPFAM" id="SSF51905">
    <property type="entry name" value="FAD/NAD(P)-binding domain"/>
    <property type="match status" value="1"/>
</dbReference>
<feature type="chain" id="PRO_0000364808" description="Ferredoxin--NADP reductase">
    <location>
        <begin position="1"/>
        <end position="344"/>
    </location>
</feature>
<feature type="binding site" evidence="1">
    <location>
        <position position="36"/>
    </location>
    <ligand>
        <name>FAD</name>
        <dbReference type="ChEBI" id="CHEBI:57692"/>
    </ligand>
</feature>
<feature type="binding site" evidence="1">
    <location>
        <position position="44"/>
    </location>
    <ligand>
        <name>FAD</name>
        <dbReference type="ChEBI" id="CHEBI:57692"/>
    </ligand>
</feature>
<feature type="binding site" evidence="1">
    <location>
        <position position="49"/>
    </location>
    <ligand>
        <name>FAD</name>
        <dbReference type="ChEBI" id="CHEBI:57692"/>
    </ligand>
</feature>
<feature type="binding site" evidence="1">
    <location>
        <position position="89"/>
    </location>
    <ligand>
        <name>FAD</name>
        <dbReference type="ChEBI" id="CHEBI:57692"/>
    </ligand>
</feature>
<feature type="binding site" evidence="1">
    <location>
        <position position="127"/>
    </location>
    <ligand>
        <name>FAD</name>
        <dbReference type="ChEBI" id="CHEBI:57692"/>
    </ligand>
</feature>
<feature type="binding site" evidence="1">
    <location>
        <position position="291"/>
    </location>
    <ligand>
        <name>FAD</name>
        <dbReference type="ChEBI" id="CHEBI:57692"/>
    </ligand>
</feature>
<feature type="binding site" evidence="1">
    <location>
        <position position="332"/>
    </location>
    <ligand>
        <name>FAD</name>
        <dbReference type="ChEBI" id="CHEBI:57692"/>
    </ligand>
</feature>
<organism>
    <name type="scientific">Beijerinckia indica subsp. indica (strain ATCC 9039 / DSM 1715 / NCIMB 8712)</name>
    <dbReference type="NCBI Taxonomy" id="395963"/>
    <lineage>
        <taxon>Bacteria</taxon>
        <taxon>Pseudomonadati</taxon>
        <taxon>Pseudomonadota</taxon>
        <taxon>Alphaproteobacteria</taxon>
        <taxon>Hyphomicrobiales</taxon>
        <taxon>Beijerinckiaceae</taxon>
        <taxon>Beijerinckia</taxon>
    </lineage>
</organism>
<evidence type="ECO:0000255" key="1">
    <source>
        <dbReference type="HAMAP-Rule" id="MF_01685"/>
    </source>
</evidence>